<reference key="1">
    <citation type="journal article" date="1994" name="J. Neurosci.">
        <title>Developmentally regulated alternative splicing generates a complex array of Drosophila para sodium channel isoforms.</title>
        <authorList>
            <person name="Thackeray J.R."/>
            <person name="Ganetzky B."/>
        </authorList>
    </citation>
    <scope>NUCLEOTIDE SEQUENCE [GENOMIC DNA]</scope>
    <scope>ALTERNATIVE SPLICING</scope>
    <source>
        <strain>Canton-S</strain>
    </source>
</reference>
<reference key="2">
    <citation type="journal article" date="2000" name="Science">
        <title>The genome sequence of Drosophila melanogaster.</title>
        <authorList>
            <person name="Adams M.D."/>
            <person name="Celniker S.E."/>
            <person name="Holt R.A."/>
            <person name="Evans C.A."/>
            <person name="Gocayne J.D."/>
            <person name="Amanatides P.G."/>
            <person name="Scherer S.E."/>
            <person name="Li P.W."/>
            <person name="Hoskins R.A."/>
            <person name="Galle R.F."/>
            <person name="George R.A."/>
            <person name="Lewis S.E."/>
            <person name="Richards S."/>
            <person name="Ashburner M."/>
            <person name="Henderson S.N."/>
            <person name="Sutton G.G."/>
            <person name="Wortman J.R."/>
            <person name="Yandell M.D."/>
            <person name="Zhang Q."/>
            <person name="Chen L.X."/>
            <person name="Brandon R.C."/>
            <person name="Rogers Y.-H.C."/>
            <person name="Blazej R.G."/>
            <person name="Champe M."/>
            <person name="Pfeiffer B.D."/>
            <person name="Wan K.H."/>
            <person name="Doyle C."/>
            <person name="Baxter E.G."/>
            <person name="Helt G."/>
            <person name="Nelson C.R."/>
            <person name="Miklos G.L.G."/>
            <person name="Abril J.F."/>
            <person name="Agbayani A."/>
            <person name="An H.-J."/>
            <person name="Andrews-Pfannkoch C."/>
            <person name="Baldwin D."/>
            <person name="Ballew R.M."/>
            <person name="Basu A."/>
            <person name="Baxendale J."/>
            <person name="Bayraktaroglu L."/>
            <person name="Beasley E.M."/>
            <person name="Beeson K.Y."/>
            <person name="Benos P.V."/>
            <person name="Berman B.P."/>
            <person name="Bhandari D."/>
            <person name="Bolshakov S."/>
            <person name="Borkova D."/>
            <person name="Botchan M.R."/>
            <person name="Bouck J."/>
            <person name="Brokstein P."/>
            <person name="Brottier P."/>
            <person name="Burtis K.C."/>
            <person name="Busam D.A."/>
            <person name="Butler H."/>
            <person name="Cadieu E."/>
            <person name="Center A."/>
            <person name="Chandra I."/>
            <person name="Cherry J.M."/>
            <person name="Cawley S."/>
            <person name="Dahlke C."/>
            <person name="Davenport L.B."/>
            <person name="Davies P."/>
            <person name="de Pablos B."/>
            <person name="Delcher A."/>
            <person name="Deng Z."/>
            <person name="Mays A.D."/>
            <person name="Dew I."/>
            <person name="Dietz S.M."/>
            <person name="Dodson K."/>
            <person name="Doup L.E."/>
            <person name="Downes M."/>
            <person name="Dugan-Rocha S."/>
            <person name="Dunkov B.C."/>
            <person name="Dunn P."/>
            <person name="Durbin K.J."/>
            <person name="Evangelista C.C."/>
            <person name="Ferraz C."/>
            <person name="Ferriera S."/>
            <person name="Fleischmann W."/>
            <person name="Fosler C."/>
            <person name="Gabrielian A.E."/>
            <person name="Garg N.S."/>
            <person name="Gelbart W.M."/>
            <person name="Glasser K."/>
            <person name="Glodek A."/>
            <person name="Gong F."/>
            <person name="Gorrell J.H."/>
            <person name="Gu Z."/>
            <person name="Guan P."/>
            <person name="Harris M."/>
            <person name="Harris N.L."/>
            <person name="Harvey D.A."/>
            <person name="Heiman T.J."/>
            <person name="Hernandez J.R."/>
            <person name="Houck J."/>
            <person name="Hostin D."/>
            <person name="Houston K.A."/>
            <person name="Howland T.J."/>
            <person name="Wei M.-H."/>
            <person name="Ibegwam C."/>
            <person name="Jalali M."/>
            <person name="Kalush F."/>
            <person name="Karpen G.H."/>
            <person name="Ke Z."/>
            <person name="Kennison J.A."/>
            <person name="Ketchum K.A."/>
            <person name="Kimmel B.E."/>
            <person name="Kodira C.D."/>
            <person name="Kraft C.L."/>
            <person name="Kravitz S."/>
            <person name="Kulp D."/>
            <person name="Lai Z."/>
            <person name="Lasko P."/>
            <person name="Lei Y."/>
            <person name="Levitsky A.A."/>
            <person name="Li J.H."/>
            <person name="Li Z."/>
            <person name="Liang Y."/>
            <person name="Lin X."/>
            <person name="Liu X."/>
            <person name="Mattei B."/>
            <person name="McIntosh T.C."/>
            <person name="McLeod M.P."/>
            <person name="McPherson D."/>
            <person name="Merkulov G."/>
            <person name="Milshina N.V."/>
            <person name="Mobarry C."/>
            <person name="Morris J."/>
            <person name="Moshrefi A."/>
            <person name="Mount S.M."/>
            <person name="Moy M."/>
            <person name="Murphy B."/>
            <person name="Murphy L."/>
            <person name="Muzny D.M."/>
            <person name="Nelson D.L."/>
            <person name="Nelson D.R."/>
            <person name="Nelson K.A."/>
            <person name="Nixon K."/>
            <person name="Nusskern D.R."/>
            <person name="Pacleb J.M."/>
            <person name="Palazzolo M."/>
            <person name="Pittman G.S."/>
            <person name="Pan S."/>
            <person name="Pollard J."/>
            <person name="Puri V."/>
            <person name="Reese M.G."/>
            <person name="Reinert K."/>
            <person name="Remington K."/>
            <person name="Saunders R.D.C."/>
            <person name="Scheeler F."/>
            <person name="Shen H."/>
            <person name="Shue B.C."/>
            <person name="Siden-Kiamos I."/>
            <person name="Simpson M."/>
            <person name="Skupski M.P."/>
            <person name="Smith T.J."/>
            <person name="Spier E."/>
            <person name="Spradling A.C."/>
            <person name="Stapleton M."/>
            <person name="Strong R."/>
            <person name="Sun E."/>
            <person name="Svirskas R."/>
            <person name="Tector C."/>
            <person name="Turner R."/>
            <person name="Venter E."/>
            <person name="Wang A.H."/>
            <person name="Wang X."/>
            <person name="Wang Z.-Y."/>
            <person name="Wassarman D.A."/>
            <person name="Weinstock G.M."/>
            <person name="Weissenbach J."/>
            <person name="Williams S.M."/>
            <person name="Woodage T."/>
            <person name="Worley K.C."/>
            <person name="Wu D."/>
            <person name="Yang S."/>
            <person name="Yao Q.A."/>
            <person name="Ye J."/>
            <person name="Yeh R.-F."/>
            <person name="Zaveri J.S."/>
            <person name="Zhan M."/>
            <person name="Zhang G."/>
            <person name="Zhao Q."/>
            <person name="Zheng L."/>
            <person name="Zheng X.H."/>
            <person name="Zhong F.N."/>
            <person name="Zhong W."/>
            <person name="Zhou X."/>
            <person name="Zhu S.C."/>
            <person name="Zhu X."/>
            <person name="Smith H.O."/>
            <person name="Gibbs R.A."/>
            <person name="Myers E.W."/>
            <person name="Rubin G.M."/>
            <person name="Venter J.C."/>
        </authorList>
    </citation>
    <scope>NUCLEOTIDE SEQUENCE [LARGE SCALE GENOMIC DNA]</scope>
    <source>
        <strain>Berkeley</strain>
    </source>
</reference>
<reference key="3">
    <citation type="journal article" date="2002" name="Genome Biol.">
        <title>Annotation of the Drosophila melanogaster euchromatic genome: a systematic review.</title>
        <authorList>
            <person name="Misra S."/>
            <person name="Crosby M.A."/>
            <person name="Mungall C.J."/>
            <person name="Matthews B.B."/>
            <person name="Campbell K.S."/>
            <person name="Hradecky P."/>
            <person name="Huang Y."/>
            <person name="Kaminker J.S."/>
            <person name="Millburn G.H."/>
            <person name="Prochnik S.E."/>
            <person name="Smith C.D."/>
            <person name="Tupy J.L."/>
            <person name="Whitfield E.J."/>
            <person name="Bayraktaroglu L."/>
            <person name="Berman B.P."/>
            <person name="Bettencourt B.R."/>
            <person name="Celniker S.E."/>
            <person name="de Grey A.D.N.J."/>
            <person name="Drysdale R.A."/>
            <person name="Harris N.L."/>
            <person name="Richter J."/>
            <person name="Russo S."/>
            <person name="Schroeder A.J."/>
            <person name="Shu S.Q."/>
            <person name="Stapleton M."/>
            <person name="Yamada C."/>
            <person name="Ashburner M."/>
            <person name="Gelbart W.M."/>
            <person name="Rubin G.M."/>
            <person name="Lewis S.E."/>
        </authorList>
    </citation>
    <scope>GENOME REANNOTATION</scope>
    <scope>ALTERNATIVE SPLICING</scope>
    <source>
        <strain>Berkeley</strain>
    </source>
</reference>
<reference key="4">
    <citation type="journal article" date="1989" name="Cell">
        <title>Molecular analysis of the para locus, a sodium channel gene in Drosophila.</title>
        <authorList>
            <person name="Loughney K."/>
            <person name="Kreber R."/>
            <person name="Ganetzky B."/>
        </authorList>
    </citation>
    <scope>NUCLEOTIDE SEQUENCE [GENOMIC DNA] OF 1-1862</scope>
    <scope>FUNCTION</scope>
    <scope>ALTERNATIVE SPLICING</scope>
    <scope>RNA EDITING OF POSITION 1587</scope>
    <source>
        <strain>Canton-S</strain>
        <tissue>Head</tissue>
    </source>
</reference>
<reference key="5">
    <citation type="submission" date="1997-10" db="EMBL/GenBank/DDBJ databases">
        <authorList>
            <person name="Tanaka Y."/>
        </authorList>
    </citation>
    <scope>NUCLEOTIDE SEQUENCE [GENOMIC DNA] OF 51-61</scope>
</reference>
<reference key="6">
    <citation type="submission" date="1999-12" db="EMBL/GenBank/DDBJ databases">
        <authorList>
            <person name="Tanaka Y."/>
            <person name="Yagi Y."/>
            <person name="Gamo S."/>
        </authorList>
    </citation>
    <scope>NUCLEOTIDE SEQUENCE [GENOMIC DNA] OF 51-61</scope>
</reference>
<reference key="7">
    <citation type="journal article" date="1989" name="Proc. Natl. Acad. Sci. U.S.A.">
        <title>Two sodium-channel genes in Drosophila: implications for channel diversity.</title>
        <authorList>
            <person name="Ramaswami M."/>
            <person name="Tanouye M.A."/>
        </authorList>
    </citation>
    <scope>NUCLEOTIDE SEQUENCE [GENOMIC DNA] OF 1683-1895</scope>
</reference>
<reference key="8">
    <citation type="journal article" date="1995" name="Genetics">
        <title>Conserved alternative splicing patterns and splicing signals in the Drosophila sodium channel gene para.</title>
        <authorList>
            <person name="Thackeray J.R."/>
            <person name="Ganetzky B."/>
        </authorList>
    </citation>
    <scope>ALTERNATIVE SPLICING</scope>
    <scope>DEVELOPMENTAL STAGE</scope>
</reference>
<reference key="9">
    <citation type="journal article" date="2000" name="Cell">
        <title>A-to-I pre-mRNA editing in Drosophila is primarily involved in adult nervous system function and integrity.</title>
        <authorList>
            <person name="Palladino M.J."/>
            <person name="Keegan L.P."/>
            <person name="O'Connell M.A."/>
            <person name="Reenan R.A."/>
        </authorList>
    </citation>
    <scope>RNA EDITING</scope>
</reference>
<reference key="10">
    <citation type="journal article" date="2000" name="Genetics">
        <title>RNA editing of the Drosophila para Na(+) channel transcript. Evolutionary conservation and developmental regulation.</title>
        <authorList>
            <person name="Hanrahan C.J."/>
            <person name="Palladino M.J."/>
            <person name="Ganetzky B."/>
            <person name="Reenan R.A."/>
        </authorList>
    </citation>
    <scope>RNA EDITING OF POSITIONS 471; 1455 AND 1587</scope>
</reference>
<evidence type="ECO:0000250" key="1">
    <source>
        <dbReference type="UniProtKB" id="D0E0C2"/>
    </source>
</evidence>
<evidence type="ECO:0000255" key="2"/>
<evidence type="ECO:0000255" key="3">
    <source>
        <dbReference type="PROSITE-ProRule" id="PRU00448"/>
    </source>
</evidence>
<evidence type="ECO:0000256" key="4">
    <source>
        <dbReference type="SAM" id="MobiDB-lite"/>
    </source>
</evidence>
<evidence type="ECO:0000269" key="5">
    <source>
    </source>
</evidence>
<evidence type="ECO:0000269" key="6">
    <source>
    </source>
</evidence>
<evidence type="ECO:0000269" key="7">
    <source>
    </source>
</evidence>
<evidence type="ECO:0000269" key="8">
    <source>
    </source>
</evidence>
<evidence type="ECO:0000305" key="9"/>
<evidence type="ECO:0000305" key="10">
    <source>
    </source>
</evidence>
<comment type="function">
    <text evidence="10">Mediates the voltage-dependent sodium ion permeability of excitable membranes. Assuming opened or closed conformations in response to the voltage difference across the membrane, the protein forms a sodium-selective channel through which Na(+) ions may pass in accordance with their electrochemical gradient.</text>
</comment>
<comment type="subcellular location">
    <subcellularLocation>
        <location evidence="10">Cell membrane</location>
        <topology evidence="1">Multi-pass membrane protein</topology>
    </subcellularLocation>
</comment>
<comment type="alternative products">
    <event type="alternative splicing"/>
    <isoform>
        <id>P35500-1</id>
        <name>A</name>
        <sequence type="displayed"/>
    </isoform>
    <isoform>
        <id>P35500-8</id>
        <name>B</name>
        <sequence type="described" ref="VSP_026200"/>
    </isoform>
    <isoform>
        <id>P35500-4</id>
        <name>C</name>
        <sequence type="described" ref="VSP_001037"/>
    </isoform>
    <isoform>
        <id>P35500-2</id>
        <name>D</name>
        <sequence type="described" ref="VSP_001035"/>
    </isoform>
    <isoform>
        <id>P35500-5</id>
        <name>E</name>
        <sequence type="described" ref="VSP_001038"/>
    </isoform>
    <isoform>
        <id>P35500-6</id>
        <name>F24</name>
        <sequence type="described" ref="VSP_001039"/>
    </isoform>
    <isoform>
        <id>P35500-7</id>
        <name>F30</name>
        <sequence type="described" ref="VSP_001040"/>
    </isoform>
    <isoform>
        <id>P35500-3</id>
        <name>exonb</name>
        <sequence type="described" ref="VSP_001036"/>
    </isoform>
    <isoform>
        <id>P35500-9</id>
        <name>exond</name>
        <sequence type="described" ref="VSP_026199"/>
    </isoform>
    <text>Further isoforms have been identified but not yet sequenced. These have different combinations of the optional exons A, B, C, D, E and F. Isoforms always have either exon C or D as these encode segment S4. Sequence identity to para from D.virilis suggests there may also be optional exons H and I.</text>
</comment>
<comment type="developmental stage">
    <text evidence="8">Isoform exonb and isoform D are seen in embryos and adults. Isoform A, isoform F24 and isoform F30 are predominant in embryos and isoform C and isoform E predominant in adults.</text>
</comment>
<comment type="domain">
    <text evidence="9">The sequence contains 4 internal repeats, each with 5 hydrophobic segments (S1, S2, S3, S5, S6) and one positively charged segment (S4). Segments S4 are probably the voltage-sensors and are characterized by a series of positively charged amino acids at every third position.</text>
</comment>
<comment type="RNA editing">
    <location>
        <position position="471" evidence="5 6"/>
    </location>
    <location>
        <position position="1455" evidence="5 6"/>
    </location>
    <location>
        <position position="1587" evidence="5 6 7"/>
    </location>
    <text>Partially edited. Further sites are edited by Adar. Positions 1455 and 1587 show minimal editing from embryos through to third larval instar, then a 40-fold increase at pupation. Position 471 has slightly higher levels during early development with only a four-fold increase at pupation.</text>
</comment>
<comment type="similarity">
    <text evidence="9">Belongs to the sodium channel (TC 1.A.1.10) family. Para subfamily.</text>
</comment>
<proteinExistence type="evidence at transcript level"/>
<organism>
    <name type="scientific">Drosophila melanogaster</name>
    <name type="common">Fruit fly</name>
    <dbReference type="NCBI Taxonomy" id="7227"/>
    <lineage>
        <taxon>Eukaryota</taxon>
        <taxon>Metazoa</taxon>
        <taxon>Ecdysozoa</taxon>
        <taxon>Arthropoda</taxon>
        <taxon>Hexapoda</taxon>
        <taxon>Insecta</taxon>
        <taxon>Pterygota</taxon>
        <taxon>Neoptera</taxon>
        <taxon>Endopterygota</taxon>
        <taxon>Diptera</taxon>
        <taxon>Brachycera</taxon>
        <taxon>Muscomorpha</taxon>
        <taxon>Ephydroidea</taxon>
        <taxon>Drosophilidae</taxon>
        <taxon>Drosophila</taxon>
        <taxon>Sophophora</taxon>
    </lineage>
</organism>
<name>SCNA_DROME</name>
<keyword id="KW-0025">Alternative splicing</keyword>
<keyword id="KW-1003">Cell membrane</keyword>
<keyword id="KW-1015">Disulfide bond</keyword>
<keyword id="KW-0325">Glycoprotein</keyword>
<keyword id="KW-0407">Ion channel</keyword>
<keyword id="KW-0406">Ion transport</keyword>
<keyword id="KW-0472">Membrane</keyword>
<keyword id="KW-0597">Phosphoprotein</keyword>
<keyword id="KW-1185">Reference proteome</keyword>
<keyword id="KW-0677">Repeat</keyword>
<keyword id="KW-0691">RNA editing</keyword>
<keyword id="KW-0915">Sodium</keyword>
<keyword id="KW-0894">Sodium channel</keyword>
<keyword id="KW-0739">Sodium transport</keyword>
<keyword id="KW-0812">Transmembrane</keyword>
<keyword id="KW-1133">Transmembrane helix</keyword>
<keyword id="KW-0813">Transport</keyword>
<keyword id="KW-0851">Voltage-gated channel</keyword>
<accession>P35500</accession>
<accession>O15994</accession>
<accession>P92137</accession>
<accession>Q0KHR8</accession>
<accession>Q0KHR9</accession>
<accession>Q24082</accession>
<accession>Q24083</accession>
<accession>Q24084</accession>
<accession>Q24528</accession>
<accession>Q24529</accession>
<accession>Q24530</accession>
<accession>Q24531</accession>
<accession>Q24532</accession>
<accession>Q9VXF7</accession>
<gene>
    <name type="primary">para</name>
    <name type="ORF">CG9907</name>
</gene>
<sequence length="2131" mass="239362">MTEDSDSISEEERSLFRPFTRESLVQIEQRIAAEHEKQKELERKRAEGEVPQYGRKKKQKEIRYDDEDEDEGPQPDPTLEQGVPIPVRLQGSFPPELASTPLEDIDPYYSNVLTFVVVSKGKDIFRFSASKAMWMLDPFNPIRRVAIYILVHPLFSLFIITTILVNCILMIMPTTPTVESTEVIFTGIYTFESAVKVMARGFILCPFTYLRDAWNWLDFVVIALAYVTMGIDLGNLAALRTFRVLRALKTVAIVPGLKTIVGAVIESVKNLRDVIILTMFSLSVFALMGLQIYMGVLTQKCIKKFPLDGSWGNLTDENWDYHNRNSSNWYSEDEGISFPLCGNISGAGQCDDDYVCLQGFGPNPNYGYTSFDSFGWAFLSAFRLMTQDFWEDLYQLVLRAAGPWHMLFFIVIIFLGSFYLVNLILAIVAMSYDELQKKAEEEEAAEEEAIREAEEAAAAKAAKLEERANAQAQAAADAAAAEEAALHPEMAKSPTYSCISYELFVGGEKGNDDNNKEKMSIRSVEVESESVSVIQRQPAPTTAHQATKVRKVSTTSLSLPGSPFNIRRGSRSSHKYTIRNGRGRFGIPGSDRKPLVLSTYQDAQQHLPYADDSNAVTPMSEENGAIIVPVYYGNLGSRHSSYTSHQSRISYTSHGDLLGGMAVMGVSTMTKESKLRNRNTRNQSVGATNGGTTCLDTNHKLDHRDYEIGLECTDEAGKIKHHDNPFIEPVQTQTVVDMKDVMVLNDIIEQAAGRHSRASDRGVSVYYFPTEDDDEDGPTFKDKALEVILKGIDVFCVWDCCWVWLKFQEWVSLIVFDPFVELFITLCIVVNTMFMAMDHHDMNKEMERVLKSGNYFFTATFAIEATMKLMAMSPKYYFQEGWNIFDFIIVALSLLELGLEGVQGLSVLRSFRLLRVFKLAKSWPTLNLLISIMGRTMGALGNLTFVLCIIIFIFAVMGMQLFGKNYHDHKDRFPDGDLPRWNFTDFMHSFMIVFRVLCGEWIESMWDCMYVGDVSCIPFFLATVVIGNLVVLNLFLALLLSNFGSSSLSAPTADNDTNKIAEAFNRIGRFKSWVKRNIADCFKLIRNKLTNQISDQPSGERTNQISWIWSEGKGVCRCISAEHGDNELELGHDEILADGLIKKGIKEQTQLEVAIGDGMEFTIHGDMKNNKPKKSKYLNNATDDDTASINSYGSHKNRPFKDESHKGSAETMEGEEKRDASKEDLGLDEELDEEGECEEGPLDGDIIIHAHDEDILDEYPADCCPDSYYKKFPILAGDDDSPFWQGWGNLRLKTFQLIENKYFETAVITMILMSSLALALEDVHLPQRPILQDILYYMDRIFTVIFFLEMLIKWLALGFKVYFTNAWCWLDFVIVMVSLINFVASLVGAGGIQAFKTMRTLRALRPLRAMSRMQGMRVVVNALVQAIPSIFNVLLVCLIFWLIFAIMGVQLFAGKYFKCEDMNGTKLSHEIIPNRNACESENYTWVNSAMNFDHVGNAYLCLFQVATFKGWIQIMNDAIDSREVDKQPIRETNIYMYLYFVFFIIFGSFFTLNLFIGVIIDNFNEQKKKAGGSLEMFMTEDQKKYYNAMKKMGSKKPLKAIPRPRWRPQAIVFEIVTDKKFDIIIMLFIGLNMFTMTLDRYDASDTYNAVLDYLNAIFVVIFSSECLLKIFALRYHYFIEPWNLFDVVVVILSILGLVLSDIIEKYFVSPTLLRVVRVAKVGRVLRLVKGAKGIRTLLFALAMSLPALFNICLLLFLVMFIFAIFGMSFFMHVKEKSGINDVYNFKTFGQSMILLFQMSTSAGWDGVLDAIINEEACDPPDNDKGYPGNCGSATVGITFLLSYLVISFLIVINMYIAVILENYSQATEDVQEGLTDDDYDMYYEIWQQFDPEGTQYIRYDQLSEFLDVLEPPLQIHKPNKYKIISMDIPICRGDLMYCVDILDALTKDFFARKGNPIEETGEIGEIAARPDTEGYEPVSSTLWRQREEYCARLIQHAWRKHKARGEGGGSFEPDTDHGDGGDPDAGDPAPDEATDGDAPAGGDGSVNGTAEGAADADESNVNSPGEDAAAAAAAAAAAAAAGTTTAGSPGAGSAGRQTAVLVESDGFVTKNGHKVVIHSRSPSITSRTADV</sequence>
<feature type="chain" id="PRO_0000048515" description="Sodium channel protein para">
    <location>
        <begin position="1"/>
        <end position="2131"/>
    </location>
</feature>
<feature type="topological domain" description="Cytoplasmic" evidence="9">
    <location>
        <begin position="1"/>
        <end position="148"/>
    </location>
</feature>
<feature type="transmembrane region" description="Helical; Name=S1 of repeat I" evidence="2">
    <location>
        <begin position="149"/>
        <end position="172"/>
    </location>
</feature>
<feature type="topological domain" description="Extracellular" evidence="9">
    <location>
        <begin position="173"/>
        <end position="180"/>
    </location>
</feature>
<feature type="transmembrane region" description="Helical; Name=S2 of repeat I" evidence="2">
    <location>
        <begin position="181"/>
        <end position="199"/>
    </location>
</feature>
<feature type="topological domain" description="Cytoplasmic" evidence="9">
    <location>
        <begin position="200"/>
        <end position="212"/>
    </location>
</feature>
<feature type="transmembrane region" description="Helical; Name=S3 of repeat I" evidence="2">
    <location>
        <begin position="213"/>
        <end position="231"/>
    </location>
</feature>
<feature type="topological domain" description="Extracellular" evidence="9">
    <location>
        <begin position="232"/>
        <end position="237"/>
    </location>
</feature>
<feature type="transmembrane region" description="Helical; Voltage-sensor; Name=S4 of repeat I" evidence="2">
    <location>
        <begin position="238"/>
        <end position="257"/>
    </location>
</feature>
<feature type="topological domain" description="Cytoplasmic" evidence="9">
    <location>
        <begin position="258"/>
        <end position="273"/>
    </location>
</feature>
<feature type="transmembrane region" description="Helical; Name=S5 of repeat I" evidence="2">
    <location>
        <begin position="274"/>
        <end position="297"/>
    </location>
</feature>
<feature type="topological domain" description="Extracellular" evidence="9">
    <location>
        <begin position="298"/>
        <end position="373"/>
    </location>
</feature>
<feature type="intramembrane region" description="Pore-forming" evidence="1">
    <location>
        <begin position="374"/>
        <end position="398"/>
    </location>
</feature>
<feature type="topological domain" description="Extracellular" evidence="9">
    <location>
        <begin position="399"/>
        <end position="405"/>
    </location>
</feature>
<feature type="transmembrane region" description="Helical; Name=S6 of repeat I" evidence="2">
    <location>
        <begin position="406"/>
        <end position="427"/>
    </location>
</feature>
<feature type="topological domain" description="Cytoplasmic" evidence="9">
    <location>
        <begin position="428"/>
        <end position="812"/>
    </location>
</feature>
<feature type="transmembrane region" description="Helical; Name=S1 of repeat II" evidence="2">
    <location>
        <begin position="813"/>
        <end position="837"/>
    </location>
</feature>
<feature type="topological domain" description="Extracellular" evidence="9">
    <location>
        <begin position="838"/>
        <end position="848"/>
    </location>
</feature>
<feature type="transmembrane region" description="Helical; Name=S2 of repeat II" evidence="2">
    <location>
        <begin position="849"/>
        <end position="873"/>
    </location>
</feature>
<feature type="topological domain" description="Cytoplasmic" evidence="9">
    <location>
        <begin position="874"/>
        <end position="880"/>
    </location>
</feature>
<feature type="transmembrane region" description="Helical; Name=S3 of repeat II" evidence="2">
    <location>
        <begin position="881"/>
        <end position="900"/>
    </location>
</feature>
<feature type="topological domain" description="Extracellular" evidence="9">
    <location>
        <begin position="901"/>
        <end position="906"/>
    </location>
</feature>
<feature type="transmembrane region" description="Helical; Voltage-sensor; Name=S4 of repeat II" evidence="2">
    <location>
        <begin position="907"/>
        <end position="926"/>
    </location>
</feature>
<feature type="topological domain" description="Cytoplasmic" evidence="9">
    <location>
        <begin position="927"/>
        <end position="941"/>
    </location>
</feature>
<feature type="transmembrane region" description="Helical; Name=S5 of repeat II" evidence="2">
    <location>
        <begin position="942"/>
        <end position="963"/>
    </location>
</feature>
<feature type="topological domain" description="Extracellular" evidence="9">
    <location>
        <begin position="964"/>
        <end position="985"/>
    </location>
</feature>
<feature type="intramembrane region" description="Pore-forming" evidence="1">
    <location>
        <begin position="986"/>
        <end position="1006"/>
    </location>
</feature>
<feature type="topological domain" description="Extracellular" evidence="9">
    <location>
        <begin position="1007"/>
        <end position="1013"/>
    </location>
</feature>
<feature type="transmembrane region" description="Helical; Name=S6 of repeat II" evidence="2">
    <location>
        <begin position="1014"/>
        <end position="1041"/>
    </location>
</feature>
<feature type="topological domain" description="Cytoplasmic" evidence="9">
    <location>
        <begin position="1042"/>
        <end position="1296"/>
    </location>
</feature>
<feature type="transmembrane region" description="Helical; Name=S1 of repeat III" evidence="2">
    <location>
        <begin position="1297"/>
        <end position="1320"/>
    </location>
</feature>
<feature type="topological domain" description="Extracellular" evidence="9">
    <location>
        <begin position="1321"/>
        <end position="1334"/>
    </location>
</feature>
<feature type="transmembrane region" description="Helical; Name=S2 of repeat III" evidence="2">
    <location>
        <begin position="1335"/>
        <end position="1359"/>
    </location>
</feature>
<feature type="topological domain" description="Cytoplasmic" evidence="9">
    <location>
        <begin position="1360"/>
        <end position="1365"/>
    </location>
</feature>
<feature type="transmembrane region" description="Helical; Name=S3 of repeat III" evidence="2">
    <location>
        <begin position="1366"/>
        <end position="1387"/>
    </location>
</feature>
<feature type="topological domain" description="Extracellular" evidence="9">
    <location>
        <begin position="1388"/>
        <end position="1391"/>
    </location>
</feature>
<feature type="transmembrane region" description="Helical; Voltage-sensor; Name=S4 of repeat III" evidence="2">
    <location>
        <begin position="1392"/>
        <end position="1413"/>
    </location>
</feature>
<feature type="topological domain" description="Cytoplasmic" evidence="9">
    <location>
        <begin position="1414"/>
        <end position="1432"/>
    </location>
</feature>
<feature type="transmembrane region" description="Helical; Name=S5 of repeat III" evidence="2">
    <location>
        <begin position="1433"/>
        <end position="1454"/>
    </location>
</feature>
<feature type="topological domain" description="Extracellular" evidence="9">
    <location>
        <begin position="1455"/>
        <end position="1495"/>
    </location>
</feature>
<feature type="intramembrane region" description="Pore-forming" evidence="1">
    <location>
        <begin position="1496"/>
        <end position="1517"/>
    </location>
</feature>
<feature type="topological domain" description="Extracellular" evidence="9">
    <location>
        <begin position="1518"/>
        <end position="1533"/>
    </location>
</feature>
<feature type="transmembrane region" description="Helical; Name=S6 of repeat III" evidence="2">
    <location>
        <begin position="1534"/>
        <end position="1560"/>
    </location>
</feature>
<feature type="topological domain" description="Cytoplasmic" evidence="9">
    <location>
        <begin position="1561"/>
        <end position="1614"/>
    </location>
</feature>
<feature type="transmembrane region" description="Helical; Name=S1 of repeat IV" evidence="2">
    <location>
        <begin position="1615"/>
        <end position="1638"/>
    </location>
</feature>
<feature type="topological domain" description="Extracellular" evidence="9">
    <location>
        <begin position="1639"/>
        <end position="1649"/>
    </location>
</feature>
<feature type="transmembrane region" description="Helical; Name=S2 of repeat IV" evidence="2">
    <location>
        <begin position="1650"/>
        <end position="1673"/>
    </location>
</feature>
<feature type="topological domain" description="Cytoplasmic" evidence="9">
    <location>
        <begin position="1674"/>
        <end position="1679"/>
    </location>
</feature>
<feature type="transmembrane region" description="Helical; Name=S3 of repeat IV" evidence="2">
    <location>
        <begin position="1680"/>
        <end position="1703"/>
    </location>
</feature>
<feature type="topological domain" description="Extracellular" evidence="9">
    <location>
        <begin position="1704"/>
        <end position="1713"/>
    </location>
</feature>
<feature type="transmembrane region" description="Helical; Voltage-sensor; Name=S4 of repeat IV" evidence="2">
    <location>
        <begin position="1714"/>
        <end position="1735"/>
    </location>
</feature>
<feature type="topological domain" description="Cytoplasmic" evidence="9">
    <location>
        <begin position="1736"/>
        <end position="1750"/>
    </location>
</feature>
<feature type="transmembrane region" description="Helical; Name=S5 of repeat IV" evidence="2">
    <location>
        <begin position="1751"/>
        <end position="1773"/>
    </location>
</feature>
<feature type="topological domain" description="Extracellular" evidence="9">
    <location>
        <begin position="1774"/>
        <end position="1787"/>
    </location>
</feature>
<feature type="intramembrane region" description="Pore-forming" evidence="1">
    <location>
        <begin position="1788"/>
        <end position="1810"/>
    </location>
</feature>
<feature type="topological domain" description="Extracellular" evidence="9">
    <location>
        <begin position="1811"/>
        <end position="1835"/>
    </location>
</feature>
<feature type="transmembrane region" description="Helical; Name=S6 of repeat IV" evidence="2">
    <location>
        <begin position="1836"/>
        <end position="1860"/>
    </location>
</feature>
<feature type="topological domain" description="Cytoplasmic" evidence="9">
    <location>
        <begin position="1861"/>
        <end position="2131"/>
    </location>
</feature>
<feature type="repeat" description="I" evidence="9">
    <location>
        <begin position="134"/>
        <end position="467"/>
    </location>
</feature>
<feature type="repeat" description="II" evidence="9">
    <location>
        <begin position="799"/>
        <end position="1069"/>
    </location>
</feature>
<feature type="repeat" description="III" evidence="9">
    <location>
        <begin position="1284"/>
        <end position="1591"/>
    </location>
</feature>
<feature type="repeat" description="IV" evidence="9">
    <location>
        <begin position="1601"/>
        <end position="1862"/>
    </location>
</feature>
<feature type="domain" description="EF-hand" evidence="3">
    <location>
        <begin position="1877"/>
        <end position="1912"/>
    </location>
</feature>
<feature type="region of interest" description="Disordered" evidence="4">
    <location>
        <begin position="35"/>
        <end position="84"/>
    </location>
</feature>
<feature type="region of interest" description="Disordered" evidence="4">
    <location>
        <begin position="553"/>
        <end position="572"/>
    </location>
</feature>
<feature type="region of interest" description="Disordered" evidence="4">
    <location>
        <begin position="671"/>
        <end position="691"/>
    </location>
</feature>
<feature type="region of interest" description="Disordered" evidence="4">
    <location>
        <begin position="1166"/>
        <end position="1240"/>
    </location>
</feature>
<feature type="region of interest" description="Disordered" evidence="4">
    <location>
        <begin position="2001"/>
        <end position="2096"/>
    </location>
</feature>
<feature type="compositionally biased region" description="Basic and acidic residues" evidence="4">
    <location>
        <begin position="35"/>
        <end position="48"/>
    </location>
</feature>
<feature type="compositionally biased region" description="Acidic residues" evidence="4">
    <location>
        <begin position="64"/>
        <end position="73"/>
    </location>
</feature>
<feature type="compositionally biased region" description="Polar residues" evidence="4">
    <location>
        <begin position="680"/>
        <end position="691"/>
    </location>
</feature>
<feature type="compositionally biased region" description="Polar residues" evidence="4">
    <location>
        <begin position="1177"/>
        <end position="1194"/>
    </location>
</feature>
<feature type="compositionally biased region" description="Basic and acidic residues" evidence="4">
    <location>
        <begin position="1199"/>
        <end position="1225"/>
    </location>
</feature>
<feature type="compositionally biased region" description="Acidic residues" evidence="4">
    <location>
        <begin position="1226"/>
        <end position="1240"/>
    </location>
</feature>
<feature type="compositionally biased region" description="Acidic residues" evidence="4">
    <location>
        <begin position="2021"/>
        <end position="2035"/>
    </location>
</feature>
<feature type="compositionally biased region" description="Low complexity" evidence="4">
    <location>
        <begin position="2068"/>
        <end position="2088"/>
    </location>
</feature>
<feature type="modified residue" description="Phosphoserine; by PKA" evidence="2">
    <location>
        <position position="553"/>
    </location>
</feature>
<feature type="modified residue" description="Phosphoserine; by PKA" evidence="2">
    <location>
        <position position="570"/>
    </location>
</feature>
<feature type="glycosylation site" description="N-linked (GlcNAc...) asparagine" evidence="2">
    <location>
        <position position="313"/>
    </location>
</feature>
<feature type="glycosylation site" description="N-linked (GlcNAc...) asparagine" evidence="2">
    <location>
        <position position="325"/>
    </location>
</feature>
<feature type="glycosylation site" description="N-linked (GlcNAc...) asparagine" evidence="2">
    <location>
        <position position="343"/>
    </location>
</feature>
<feature type="glycosylation site" description="N-linked (GlcNAc...) asparagine" evidence="2">
    <location>
        <position position="982"/>
    </location>
</feature>
<feature type="glycosylation site" description="N-linked (GlcNAc...) asparagine" evidence="2">
    <location>
        <position position="1463"/>
    </location>
</feature>
<feature type="glycosylation site" description="N-linked (GlcNAc...) asparagine" evidence="2">
    <location>
        <position position="1482"/>
    </location>
</feature>
<feature type="disulfide bond" evidence="1">
    <location>
        <begin position="301"/>
        <end position="350"/>
    </location>
</feature>
<feature type="disulfide bond" evidence="1">
    <location>
        <begin position="1008"/>
        <end position="1016"/>
    </location>
</feature>
<feature type="splice variant" id="VSP_001035" description="In isoform D." evidence="9">
    <location>
        <begin position="555"/>
        <end position="575"/>
    </location>
</feature>
<feature type="splice variant" id="VSP_001036" description="In isoform exonb." evidence="9">
    <location>
        <begin position="763"/>
        <end position="770"/>
    </location>
</feature>
<feature type="splice variant" id="VSP_026199" description="In isoform exond." evidence="9">
    <location>
        <begin position="914"/>
        <end position="967"/>
    </location>
</feature>
<feature type="splice variant" id="VSP_001037" description="In isoform C." evidence="9">
    <original>MGALGNLTFVLCIIIFIFAVMGMQLFGKNYH</original>
    <variation>VGALGNLTFVLCIIIFIFAVMGMQLFGKNYT</variation>
    <location>
        <begin position="937"/>
        <end position="967"/>
    </location>
</feature>
<feature type="splice variant" id="VSP_001038" description="In isoform E." evidence="9">
    <location>
        <begin position="1100"/>
        <end position="1112"/>
    </location>
</feature>
<feature type="splice variant" id="VSP_001039" description="In isoform F24." evidence="9">
    <location>
        <begin position="1113"/>
        <end position="1122"/>
    </location>
</feature>
<feature type="splice variant" id="VSP_001040" description="In isoform F30." evidence="9">
    <location>
        <begin position="1115"/>
        <end position="1122"/>
    </location>
</feature>
<feature type="splice variant" id="VSP_026200" description="In isoform B." evidence="9">
    <original>VSLINFVASLVGAGGIQAFKTMRTLRALRPLRAMSRMQGMR</original>
    <variation>LSLINLAAVWSGADDVPAFRSMRTLRALRPLRAVSRWEGMK</variation>
    <location>
        <begin position="1377"/>
        <end position="1417"/>
    </location>
</feature>
<feature type="sequence variant" description="In RNA edited version.">
    <original>Q</original>
    <variation>R</variation>
    <location>
        <position position="471"/>
    </location>
</feature>
<feature type="sequence variant" description="In RNA edited version.">
    <original>K</original>
    <variation>R</variation>
    <location>
        <position position="1455"/>
    </location>
</feature>
<feature type="sequence variant" description="In RNA edited version.">
    <original>N</original>
    <variation>S</variation>
    <location>
        <position position="1587"/>
    </location>
</feature>
<feature type="sequence conflict" description="In Ref. 4; AAB59190/AAB59191/AAB59193/AAB59194/AAB59195." evidence="9" ref="4">
    <original>Q</original>
    <variation>R</variation>
    <location>
        <position position="52"/>
    </location>
</feature>
<feature type="sequence conflict" description="In Ref. 4; AAB59190/AAB59191/AAB59193/AAB59194/AAB59195." evidence="9" ref="4">
    <original>Q</original>
    <variation>E</variation>
    <location>
        <position position="299"/>
    </location>
</feature>
<feature type="sequence conflict" description="In Ref. 1; AAA98542." evidence="9" ref="1">
    <original>K</original>
    <variation>E</variation>
    <location>
        <position position="304"/>
    </location>
</feature>
<feature type="sequence conflict" description="In Ref. 1; AAA98542 and 4; AAB59190/AAB59191/AAB59193/AAB59194/AAB59195." evidence="9" ref="1 4">
    <original>K</original>
    <variation>R</variation>
    <location>
        <position position="437"/>
    </location>
</feature>
<feature type="sequence conflict" description="In Ref. 1; AAA98542." evidence="9" ref="1">
    <original>EAE</original>
    <variation>VSR</variation>
    <location>
        <begin position="452"/>
        <end position="454"/>
    </location>
</feature>
<feature type="sequence conflict" description="In Ref. 1; AAA98543." evidence="9" ref="1">
    <original>SE</original>
    <variation>TK</variation>
    <location>
        <begin position="1110"/>
        <end position="1111"/>
    </location>
</feature>
<feature type="sequence conflict" description="In Ref. 4; AAB59190/AAB59191/AAB59193/AAB59194/AAB59195." evidence="9" ref="4">
    <original>Q</original>
    <variation>R</variation>
    <location>
        <position position="1296"/>
    </location>
</feature>
<feature type="sequence conflict" description="In Ref. 4; AAB59190/AAB59191/AAB59193/AAB59194/AAB59195." evidence="9" ref="4">
    <original>N</original>
    <variation>D</variation>
    <location>
        <position position="1300"/>
    </location>
</feature>
<feature type="sequence conflict" description="In Ref. 4; AAB59190/AAB59191/AAB59193/AAB59194/AAB59195." evidence="9" ref="4">
    <original>F</original>
    <variation>L</variation>
    <location>
        <position position="1363"/>
    </location>
</feature>
<dbReference type="EMBL" id="U26713">
    <property type="protein sequence ID" value="AAA98541.1"/>
    <property type="molecule type" value="Genomic_DNA"/>
</dbReference>
<dbReference type="EMBL" id="U26714">
    <property type="protein sequence ID" value="AAA98542.1"/>
    <property type="molecule type" value="Genomic_DNA"/>
</dbReference>
<dbReference type="EMBL" id="U26715">
    <property type="protein sequence ID" value="AAA98543.1"/>
    <property type="molecule type" value="Genomic_DNA"/>
</dbReference>
<dbReference type="EMBL" id="U26716">
    <property type="protein sequence ID" value="AAA98544.1"/>
    <property type="molecule type" value="Genomic_DNA"/>
</dbReference>
<dbReference type="EMBL" id="U26716">
    <property type="protein sequence ID" value="AAA98545.1"/>
    <property type="molecule type" value="Genomic_DNA"/>
</dbReference>
<dbReference type="EMBL" id="U26716">
    <property type="protein sequence ID" value="AAA98546.1"/>
    <property type="molecule type" value="Genomic_DNA"/>
</dbReference>
<dbReference type="EMBL" id="U26716">
    <property type="protein sequence ID" value="AAA98547.1"/>
    <property type="molecule type" value="Genomic_DNA"/>
</dbReference>
<dbReference type="EMBL" id="U26716">
    <property type="protein sequence ID" value="AAA98548.1"/>
    <property type="molecule type" value="Genomic_DNA"/>
</dbReference>
<dbReference type="EMBL" id="U26717">
    <property type="protein sequence ID" value="AAA98549.1"/>
    <property type="molecule type" value="Genomic_DNA"/>
</dbReference>
<dbReference type="EMBL" id="AE014298">
    <property type="protein sequence ID" value="AAF48617.2"/>
    <property type="molecule type" value="Genomic_DNA"/>
</dbReference>
<dbReference type="EMBL" id="AE014298">
    <property type="protein sequence ID" value="ABI30985.1"/>
    <property type="molecule type" value="Genomic_DNA"/>
</dbReference>
<dbReference type="EMBL" id="AE014298">
    <property type="protein sequence ID" value="ABI30986.1"/>
    <property type="molecule type" value="Genomic_DNA"/>
</dbReference>
<dbReference type="EMBL" id="M32078">
    <property type="protein sequence ID" value="AAB59190.1"/>
    <property type="molecule type" value="Genomic_DNA"/>
</dbReference>
<dbReference type="EMBL" id="M32078">
    <property type="protein sequence ID" value="AAB59191.1"/>
    <property type="molecule type" value="Genomic_DNA"/>
</dbReference>
<dbReference type="EMBL" id="M32078">
    <property type="protein sequence ID" value="AAB59192.1"/>
    <property type="molecule type" value="Genomic_DNA"/>
</dbReference>
<dbReference type="EMBL" id="M32078">
    <property type="protein sequence ID" value="AAB59193.1"/>
    <property type="molecule type" value="Genomic_DNA"/>
</dbReference>
<dbReference type="EMBL" id="M32078">
    <property type="protein sequence ID" value="AAB59194.1"/>
    <property type="molecule type" value="Genomic_DNA"/>
</dbReference>
<dbReference type="EMBL" id="M32078">
    <property type="protein sequence ID" value="AAB59195.1"/>
    <property type="molecule type" value="Genomic_DNA"/>
</dbReference>
<dbReference type="EMBL" id="AB008113">
    <property type="protein sequence ID" value="BAA22890.1"/>
    <property type="molecule type" value="Genomic_DNA"/>
</dbReference>
<dbReference type="EMBL" id="AB035812">
    <property type="protein sequence ID" value="BAA88526.1"/>
    <property type="molecule type" value="Genomic_DNA"/>
</dbReference>
<dbReference type="PIR" id="A30302">
    <property type="entry name" value="A30302"/>
</dbReference>
<dbReference type="PIR" id="A33299">
    <property type="entry name" value="A33299"/>
</dbReference>
<dbReference type="RefSeq" id="NP_001036280.1">
    <molecule id="P35500-8"/>
    <property type="nucleotide sequence ID" value="NM_001042815.2"/>
</dbReference>
<dbReference type="RefSeq" id="NP_001036281.1">
    <molecule id="P35500-4"/>
    <property type="nucleotide sequence ID" value="NM_001042816.2"/>
</dbReference>
<dbReference type="RefSeq" id="NP_001188616.1">
    <molecule id="P35500-5"/>
    <property type="nucleotide sequence ID" value="NM_001201687.1"/>
</dbReference>
<dbReference type="RefSeq" id="NP_001285332.1">
    <molecule id="P35500-1"/>
    <property type="nucleotide sequence ID" value="NM_001298403.1"/>
</dbReference>
<dbReference type="RefSeq" id="NP_523371.2">
    <molecule id="P35500-1"/>
    <property type="nucleotide sequence ID" value="NM_078647.4"/>
</dbReference>
<dbReference type="SMR" id="P35500"/>
<dbReference type="BioGRID" id="58957">
    <property type="interactions" value="35"/>
</dbReference>
<dbReference type="FunCoup" id="P35500">
    <property type="interactions" value="290"/>
</dbReference>
<dbReference type="IntAct" id="P35500">
    <property type="interactions" value="1"/>
</dbReference>
<dbReference type="STRING" id="7227.FBpp0303597"/>
<dbReference type="GlyCosmos" id="P35500">
    <property type="glycosylation" value="6 sites, No reported glycans"/>
</dbReference>
<dbReference type="GlyGen" id="P35500">
    <property type="glycosylation" value="7 sites"/>
</dbReference>
<dbReference type="PaxDb" id="7227-FBpp0292707"/>
<dbReference type="EnsemblMetazoa" id="FBtr0074298">
    <molecule id="P35500-1"/>
    <property type="protein sequence ID" value="FBpp0074073"/>
    <property type="gene ID" value="FBgn0285944"/>
</dbReference>
<dbReference type="EnsemblMetazoa" id="FBtr0111022">
    <molecule id="P35500-8"/>
    <property type="protein sequence ID" value="FBpp0110321"/>
    <property type="gene ID" value="FBgn0285944"/>
</dbReference>
<dbReference type="EnsemblMetazoa" id="FBtr0111023">
    <molecule id="P35500-4"/>
    <property type="protein sequence ID" value="FBpp0110322"/>
    <property type="gene ID" value="FBgn0285944"/>
</dbReference>
<dbReference type="EnsemblMetazoa" id="FBtr0303671">
    <molecule id="P35500-5"/>
    <property type="protein sequence ID" value="FBpp0292688"/>
    <property type="gene ID" value="FBgn0285944"/>
</dbReference>
<dbReference type="EnsemblMetazoa" id="FBtr0342746">
    <molecule id="P35500-1"/>
    <property type="protein sequence ID" value="FBpp0309614"/>
    <property type="gene ID" value="FBgn0285944"/>
</dbReference>
<dbReference type="GeneID" id="32619"/>
<dbReference type="KEGG" id="dme:Dmel_CG9907"/>
<dbReference type="UCSC" id="CG9907-RA">
    <molecule id="P35500-1"/>
    <property type="organism name" value="d. melanogaster"/>
</dbReference>
<dbReference type="AGR" id="FB:FBgn0285944"/>
<dbReference type="CTD" id="32619"/>
<dbReference type="FlyBase" id="FBgn0285944">
    <property type="gene designation" value="para"/>
</dbReference>
<dbReference type="VEuPathDB" id="VectorBase:FBgn0285944"/>
<dbReference type="eggNOG" id="KOG2301">
    <property type="taxonomic scope" value="Eukaryota"/>
</dbReference>
<dbReference type="GeneTree" id="ENSGT00940000167131"/>
<dbReference type="InParanoid" id="P35500"/>
<dbReference type="OMA" id="DPFYHNQ"/>
<dbReference type="OrthoDB" id="2984333at2759"/>
<dbReference type="PhylomeDB" id="P35500"/>
<dbReference type="BioGRID-ORCS" id="32619">
    <property type="hits" value="0 hits in 3 CRISPR screens"/>
</dbReference>
<dbReference type="ChiTaRS" id="para">
    <property type="organism name" value="fly"/>
</dbReference>
<dbReference type="GenomeRNAi" id="32619"/>
<dbReference type="PRO" id="PR:P35500"/>
<dbReference type="Proteomes" id="UP000000803">
    <property type="component" value="Chromosome X"/>
</dbReference>
<dbReference type="Bgee" id="FBgn0285944">
    <property type="expression patterns" value="Expressed in lamina monopolar neuron L2 (Drosophila) in insect head and 208 other cell types or tissues"/>
</dbReference>
<dbReference type="ExpressionAtlas" id="P35500">
    <property type="expression patterns" value="baseline and differential"/>
</dbReference>
<dbReference type="GO" id="GO:0005886">
    <property type="term" value="C:plasma membrane"/>
    <property type="evidence" value="ECO:0000314"/>
    <property type="project" value="FlyBase"/>
</dbReference>
<dbReference type="GO" id="GO:0001518">
    <property type="term" value="C:voltage-gated sodium channel complex"/>
    <property type="evidence" value="ECO:0000318"/>
    <property type="project" value="GO_Central"/>
</dbReference>
<dbReference type="GO" id="GO:0005509">
    <property type="term" value="F:calcium ion binding"/>
    <property type="evidence" value="ECO:0007669"/>
    <property type="project" value="InterPro"/>
</dbReference>
<dbReference type="GO" id="GO:0005272">
    <property type="term" value="F:sodium channel activity"/>
    <property type="evidence" value="ECO:0000315"/>
    <property type="project" value="FlyBase"/>
</dbReference>
<dbReference type="GO" id="GO:0005248">
    <property type="term" value="F:voltage-gated sodium channel activity"/>
    <property type="evidence" value="ECO:0000314"/>
    <property type="project" value="FlyBase"/>
</dbReference>
<dbReference type="GO" id="GO:0045433">
    <property type="term" value="P:male courtship behavior, veined wing generated song production"/>
    <property type="evidence" value="ECO:0000315"/>
    <property type="project" value="FlyBase"/>
</dbReference>
<dbReference type="GO" id="GO:0007638">
    <property type="term" value="P:mechanosensory behavior"/>
    <property type="evidence" value="ECO:0000315"/>
    <property type="project" value="FlyBase"/>
</dbReference>
<dbReference type="GO" id="GO:0086010">
    <property type="term" value="P:membrane depolarization during action potential"/>
    <property type="evidence" value="ECO:0000318"/>
    <property type="project" value="GO_Central"/>
</dbReference>
<dbReference type="GO" id="GO:0019228">
    <property type="term" value="P:neuronal action potential"/>
    <property type="evidence" value="ECO:0000318"/>
    <property type="project" value="GO_Central"/>
</dbReference>
<dbReference type="GO" id="GO:0060078">
    <property type="term" value="P:regulation of postsynaptic membrane potential"/>
    <property type="evidence" value="ECO:0000315"/>
    <property type="project" value="FlyBase"/>
</dbReference>
<dbReference type="GO" id="GO:0001666">
    <property type="term" value="P:response to hypoxia"/>
    <property type="evidence" value="ECO:0000314"/>
    <property type="project" value="FlyBase"/>
</dbReference>
<dbReference type="GO" id="GO:0009612">
    <property type="term" value="P:response to mechanical stimulus"/>
    <property type="evidence" value="ECO:0000315"/>
    <property type="project" value="FlyBase"/>
</dbReference>
<dbReference type="GO" id="GO:0007605">
    <property type="term" value="P:sensory perception of sound"/>
    <property type="evidence" value="ECO:0000315"/>
    <property type="project" value="FlyBase"/>
</dbReference>
<dbReference type="GO" id="GO:0035725">
    <property type="term" value="P:sodium ion transmembrane transport"/>
    <property type="evidence" value="ECO:0000314"/>
    <property type="project" value="FlyBase"/>
</dbReference>
<dbReference type="CDD" id="cd13433">
    <property type="entry name" value="Na_channel_gate"/>
    <property type="match status" value="1"/>
</dbReference>
<dbReference type="FunFam" id="1.10.238.10:FF:000061">
    <property type="entry name" value="Sodium channel protein"/>
    <property type="match status" value="1"/>
</dbReference>
<dbReference type="FunFam" id="1.10.287.70:FF:000046">
    <property type="entry name" value="Sodium channel protein"/>
    <property type="match status" value="1"/>
</dbReference>
<dbReference type="FunFam" id="1.10.287.70:FF:000047">
    <property type="entry name" value="Sodium channel protein"/>
    <property type="match status" value="1"/>
</dbReference>
<dbReference type="FunFam" id="1.20.120.350:FF:000019">
    <property type="entry name" value="Sodium channel protein"/>
    <property type="match status" value="1"/>
</dbReference>
<dbReference type="FunFam" id="1.20.120.350:FF:000022">
    <property type="entry name" value="Sodium channel protein"/>
    <property type="match status" value="1"/>
</dbReference>
<dbReference type="FunFam" id="1.20.120.350:FF:000023">
    <property type="entry name" value="Sodium channel protein"/>
    <property type="match status" value="1"/>
</dbReference>
<dbReference type="FunFam" id="1.20.120.350:FF:000026">
    <property type="entry name" value="Sodium channel protein"/>
    <property type="match status" value="1"/>
</dbReference>
<dbReference type="Gene3D" id="1.10.287.70">
    <property type="match status" value="4"/>
</dbReference>
<dbReference type="Gene3D" id="1.10.238.10">
    <property type="entry name" value="EF-hand"/>
    <property type="match status" value="1"/>
</dbReference>
<dbReference type="Gene3D" id="1.20.120.350">
    <property type="entry name" value="Voltage-gated potassium channels. Chain C"/>
    <property type="match status" value="4"/>
</dbReference>
<dbReference type="InterPro" id="IPR002048">
    <property type="entry name" value="EF_hand_dom"/>
</dbReference>
<dbReference type="InterPro" id="IPR005821">
    <property type="entry name" value="Ion_trans_dom"/>
</dbReference>
<dbReference type="InterPro" id="IPR001696">
    <property type="entry name" value="Na_channel_asu"/>
</dbReference>
<dbReference type="InterPro" id="IPR044564">
    <property type="entry name" value="Na_chnl_inactivation_gate"/>
</dbReference>
<dbReference type="InterPro" id="IPR010526">
    <property type="entry name" value="Na_trans_assoc_dom"/>
</dbReference>
<dbReference type="InterPro" id="IPR024583">
    <property type="entry name" value="Na_trans_cytopl"/>
</dbReference>
<dbReference type="InterPro" id="IPR043203">
    <property type="entry name" value="VGCC_Ca_Na"/>
</dbReference>
<dbReference type="InterPro" id="IPR027359">
    <property type="entry name" value="Volt_channel_dom_sf"/>
</dbReference>
<dbReference type="PANTHER" id="PTHR10037:SF288">
    <property type="entry name" value="SODIUM CHANNEL PROTEIN PARA"/>
    <property type="match status" value="1"/>
</dbReference>
<dbReference type="PANTHER" id="PTHR10037">
    <property type="entry name" value="VOLTAGE-GATED CATION CHANNEL CALCIUM AND SODIUM"/>
    <property type="match status" value="1"/>
</dbReference>
<dbReference type="Pfam" id="PF00520">
    <property type="entry name" value="Ion_trans"/>
    <property type="match status" value="4"/>
</dbReference>
<dbReference type="Pfam" id="PF06512">
    <property type="entry name" value="Na_trans_assoc"/>
    <property type="match status" value="1"/>
</dbReference>
<dbReference type="Pfam" id="PF11933">
    <property type="entry name" value="Na_trans_cytopl"/>
    <property type="match status" value="1"/>
</dbReference>
<dbReference type="PRINTS" id="PR00170">
    <property type="entry name" value="NACHANNEL"/>
</dbReference>
<dbReference type="SUPFAM" id="SSF81324">
    <property type="entry name" value="Voltage-gated potassium channels"/>
    <property type="match status" value="4"/>
</dbReference>
<dbReference type="PROSITE" id="PS50222">
    <property type="entry name" value="EF_HAND_2"/>
    <property type="match status" value="1"/>
</dbReference>
<protein>
    <recommendedName>
        <fullName>Sodium channel protein para</fullName>
    </recommendedName>
    <alternativeName>
        <fullName>Protein paralytic</fullName>
    </alternativeName>
    <alternativeName>
        <fullName>Sodium channel 1</fullName>
        <shortName>DmNav1</shortName>
    </alternativeName>
</protein>